<name>NTP1_SWPVK</name>
<comment type="function">
    <text evidence="1">Serves two roles in transcription; it acts in concert with viral termination factor/capping enzyme to catalyze release of UUUUUNU-containing nascent RNA from the elongation complex, and it acts by itself as a polymerase elongation factor to facilitate readthrough of intrinsic pause sites.</text>
</comment>
<comment type="catalytic activity">
    <reaction>
        <text>a ribonucleoside 5'-triphosphate + H2O = a ribonucleoside 5'-diphosphate + phosphate + H(+)</text>
        <dbReference type="Rhea" id="RHEA:23680"/>
        <dbReference type="ChEBI" id="CHEBI:15377"/>
        <dbReference type="ChEBI" id="CHEBI:15378"/>
        <dbReference type="ChEBI" id="CHEBI:43474"/>
        <dbReference type="ChEBI" id="CHEBI:57930"/>
        <dbReference type="ChEBI" id="CHEBI:61557"/>
        <dbReference type="EC" id="3.6.1.15"/>
    </reaction>
</comment>
<comment type="similarity">
    <text evidence="3">Belongs to the helicase family. NPH I subfamily.</text>
</comment>
<reference key="1">
    <citation type="journal article" date="1993" name="Virology">
        <title>DNA sequence analysis of conserved and unique regions of swinepox virus: identification of genetic elements supporting phenotypic observations including a novel G protein-coupled receptor homologue.</title>
        <authorList>
            <person name="Massung R.F."/>
            <person name="Jayarama V."/>
            <person name="Moyer R.W."/>
        </authorList>
    </citation>
    <scope>NUCLEOTIDE SEQUENCE [GENOMIC DNA]</scope>
</reference>
<organism>
    <name type="scientific">Swinepox virus (strain Kasza)</name>
    <name type="common">SWPV</name>
    <dbReference type="NCBI Taxonomy" id="10277"/>
    <lineage>
        <taxon>Viruses</taxon>
        <taxon>Varidnaviria</taxon>
        <taxon>Bamfordvirae</taxon>
        <taxon>Nucleocytoviricota</taxon>
        <taxon>Pokkesviricetes</taxon>
        <taxon>Chitovirales</taxon>
        <taxon>Poxviridae</taxon>
        <taxon>Chordopoxvirinae</taxon>
        <taxon>Suipoxvirus</taxon>
        <taxon>Swinepox virus</taxon>
    </lineage>
</organism>
<gene>
    <name type="primary">NPH1</name>
</gene>
<accession>Q08513</accession>
<dbReference type="EC" id="3.6.1.15"/>
<dbReference type="EMBL" id="L22012">
    <property type="protein sequence ID" value="AAA16175.1"/>
    <property type="molecule type" value="Unassigned_DNA"/>
</dbReference>
<dbReference type="SMR" id="Q08513"/>
<dbReference type="GO" id="GO:0005524">
    <property type="term" value="F:ATP binding"/>
    <property type="evidence" value="ECO:0007669"/>
    <property type="project" value="UniProtKB-KW"/>
</dbReference>
<dbReference type="GO" id="GO:0017111">
    <property type="term" value="F:ribonucleoside triphosphate phosphatase activity"/>
    <property type="evidence" value="ECO:0007669"/>
    <property type="project" value="UniProtKB-EC"/>
</dbReference>
<dbReference type="Gene3D" id="3.40.50.300">
    <property type="entry name" value="P-loop containing nucleotide triphosphate hydrolases"/>
    <property type="match status" value="1"/>
</dbReference>
<dbReference type="InterPro" id="IPR027417">
    <property type="entry name" value="P-loop_NTPase"/>
</dbReference>
<dbReference type="InterPro" id="IPR000330">
    <property type="entry name" value="SNF2_N"/>
</dbReference>
<dbReference type="Pfam" id="PF00176">
    <property type="entry name" value="SNF2-rel_dom"/>
    <property type="match status" value="1"/>
</dbReference>
<dbReference type="SUPFAM" id="SSF52540">
    <property type="entry name" value="P-loop containing nucleoside triphosphate hydrolases"/>
    <property type="match status" value="1"/>
</dbReference>
<feature type="chain" id="PRO_0000099097" description="Nucleoside triphosphatase I">
    <location>
        <begin position="1"/>
        <end position="89" status="greater than"/>
    </location>
</feature>
<feature type="domain" description="Helicase ATP-binding" evidence="2">
    <location>
        <begin position="42"/>
        <end position="89" status="greater than"/>
    </location>
</feature>
<feature type="binding site" evidence="2">
    <location>
        <begin position="55"/>
        <end position="62"/>
    </location>
    <ligand>
        <name>ATP</name>
        <dbReference type="ChEBI" id="CHEBI:30616"/>
    </ligand>
</feature>
<feature type="non-terminal residue">
    <location>
        <position position="89"/>
    </location>
</feature>
<proteinExistence type="inferred from homology"/>
<evidence type="ECO:0000250" key="1"/>
<evidence type="ECO:0000255" key="2">
    <source>
        <dbReference type="PROSITE-ProRule" id="PRU00541"/>
    </source>
</evidence>
<evidence type="ECO:0000305" key="3"/>
<sequence>MSSYHAAYIDYELRVTESMTDTMGTDTEITLKPYQHFVASVFLGLDKMHSLLLFHDTGVGKTITTTFIIKQLKNIYTNWSILLLVKKHL</sequence>
<keyword id="KW-0067">ATP-binding</keyword>
<keyword id="KW-0378">Hydrolase</keyword>
<keyword id="KW-0547">Nucleotide-binding</keyword>
<keyword id="KW-0804">Transcription</keyword>
<protein>
    <recommendedName>
        <fullName>Nucleoside triphosphatase I</fullName>
        <ecNumber>3.6.1.15</ecNumber>
    </recommendedName>
    <alternativeName>
        <fullName>Nucleoside triphosphate phosphohydrolase I</fullName>
        <shortName>NPH I</shortName>
    </alternativeName>
</protein>
<organismHost>
    <name type="scientific">Sus scrofa</name>
    <name type="common">Pig</name>
    <dbReference type="NCBI Taxonomy" id="9823"/>
</organismHost>